<evidence type="ECO:0000255" key="1">
    <source>
        <dbReference type="HAMAP-Rule" id="MF_01815"/>
    </source>
</evidence>
<sequence length="335" mass="37220">MDKINAVITGVGGYVPDYVLTNDEISKMVDTTDEWIMGRIGIKERHILNEEGLGTSYMARKAAKQLMQRTKSRPDDIDLVIVATTTSDYRFPSTASILCERLGLKNAFAFDMQAVCSGFLYAMETGANFIRSGKYKKIIIVGADKMSSVIDYTDRATCPIFGDGAAAFMLEPTTEEVGIMDSVLRTDGKGLPFLHIKAGGSVCPPSYYSLDHHLHYIYQEGRTVFKYAVANMSDSCEAIIARNHLTKEEVDWVIPHQANQRIITAVAQRLEVPSEKVMVNIERYGNTSAGTLPLCIWDFEKKLKKGDNLIFTAFGAGFAWGAVYVKWGYDPKEDA</sequence>
<gene>
    <name evidence="1" type="primary">fabH1</name>
    <name type="ordered locus">BT_0122</name>
</gene>
<feature type="chain" id="PRO_0000110401" description="Beta-ketoacyl-[acyl-carrier-protein] synthase III 1">
    <location>
        <begin position="1"/>
        <end position="335"/>
    </location>
</feature>
<feature type="region of interest" description="ACP-binding" evidence="1">
    <location>
        <begin position="257"/>
        <end position="261"/>
    </location>
</feature>
<feature type="active site" evidence="1">
    <location>
        <position position="116"/>
    </location>
</feature>
<feature type="active site" evidence="1">
    <location>
        <position position="256"/>
    </location>
</feature>
<feature type="active site" evidence="1">
    <location>
        <position position="286"/>
    </location>
</feature>
<reference key="1">
    <citation type="journal article" date="2003" name="Science">
        <title>A genomic view of the human-Bacteroides thetaiotaomicron symbiosis.</title>
        <authorList>
            <person name="Xu J."/>
            <person name="Bjursell M.K."/>
            <person name="Himrod J."/>
            <person name="Deng S."/>
            <person name="Carmichael L.K."/>
            <person name="Chiang H.C."/>
            <person name="Hooper L.V."/>
            <person name="Gordon J.I."/>
        </authorList>
    </citation>
    <scope>NUCLEOTIDE SEQUENCE [LARGE SCALE GENOMIC DNA]</scope>
    <source>
        <strain>ATCC 29148 / DSM 2079 / JCM 5827 / CCUG 10774 / NCTC 10582 / VPI-5482 / E50</strain>
    </source>
</reference>
<name>FABH1_BACTN</name>
<protein>
    <recommendedName>
        <fullName evidence="1">Beta-ketoacyl-[acyl-carrier-protein] synthase III 1</fullName>
        <shortName evidence="1">Beta-ketoacyl-ACP synthase III 1</shortName>
        <shortName evidence="1">KAS III 1</shortName>
        <ecNumber evidence="1">2.3.1.180</ecNumber>
    </recommendedName>
    <alternativeName>
        <fullName evidence="1">3-oxoacyl-[acyl-carrier-protein] synthase 3 1</fullName>
    </alternativeName>
    <alternativeName>
        <fullName evidence="1">3-oxoacyl-[acyl-carrier-protein] synthase III 1</fullName>
    </alternativeName>
</protein>
<organism>
    <name type="scientific">Bacteroides thetaiotaomicron (strain ATCC 29148 / DSM 2079 / JCM 5827 / CCUG 10774 / NCTC 10582 / VPI-5482 / E50)</name>
    <dbReference type="NCBI Taxonomy" id="226186"/>
    <lineage>
        <taxon>Bacteria</taxon>
        <taxon>Pseudomonadati</taxon>
        <taxon>Bacteroidota</taxon>
        <taxon>Bacteroidia</taxon>
        <taxon>Bacteroidales</taxon>
        <taxon>Bacteroidaceae</taxon>
        <taxon>Bacteroides</taxon>
    </lineage>
</organism>
<accession>Q8ABI8</accession>
<comment type="function">
    <text evidence="1">Catalyzes the condensation reaction of fatty acid synthesis by the addition to an acyl acceptor of two carbons from malonyl-ACP. Catalyzes the first condensation reaction which initiates fatty acid synthesis and may therefore play a role in governing the total rate of fatty acid production. Possesses both acetoacetyl-ACP synthase and acetyl transacylase activities. Its substrate specificity determines the biosynthesis of branched-chain and/or straight-chain of fatty acids.</text>
</comment>
<comment type="catalytic activity">
    <reaction evidence="1">
        <text>malonyl-[ACP] + acetyl-CoA + H(+) = 3-oxobutanoyl-[ACP] + CO2 + CoA</text>
        <dbReference type="Rhea" id="RHEA:12080"/>
        <dbReference type="Rhea" id="RHEA-COMP:9623"/>
        <dbReference type="Rhea" id="RHEA-COMP:9625"/>
        <dbReference type="ChEBI" id="CHEBI:15378"/>
        <dbReference type="ChEBI" id="CHEBI:16526"/>
        <dbReference type="ChEBI" id="CHEBI:57287"/>
        <dbReference type="ChEBI" id="CHEBI:57288"/>
        <dbReference type="ChEBI" id="CHEBI:78449"/>
        <dbReference type="ChEBI" id="CHEBI:78450"/>
        <dbReference type="EC" id="2.3.1.180"/>
    </reaction>
</comment>
<comment type="pathway">
    <text evidence="1">Lipid metabolism; fatty acid biosynthesis.</text>
</comment>
<comment type="subunit">
    <text evidence="1">Homodimer.</text>
</comment>
<comment type="subcellular location">
    <subcellularLocation>
        <location evidence="1">Cytoplasm</location>
    </subcellularLocation>
</comment>
<comment type="domain">
    <text evidence="1">The last Arg residue of the ACP-binding site is essential for the weak association between ACP/AcpP and FabH.</text>
</comment>
<comment type="similarity">
    <text evidence="1">Belongs to the thiolase-like superfamily. FabH family.</text>
</comment>
<proteinExistence type="inferred from homology"/>
<keyword id="KW-0012">Acyltransferase</keyword>
<keyword id="KW-0963">Cytoplasm</keyword>
<keyword id="KW-0275">Fatty acid biosynthesis</keyword>
<keyword id="KW-0276">Fatty acid metabolism</keyword>
<keyword id="KW-0444">Lipid biosynthesis</keyword>
<keyword id="KW-0443">Lipid metabolism</keyword>
<keyword id="KW-0511">Multifunctional enzyme</keyword>
<keyword id="KW-1185">Reference proteome</keyword>
<keyword id="KW-0808">Transferase</keyword>
<dbReference type="EC" id="2.3.1.180" evidence="1"/>
<dbReference type="EMBL" id="AE015928">
    <property type="protein sequence ID" value="AAO75229.1"/>
    <property type="molecule type" value="Genomic_DNA"/>
</dbReference>
<dbReference type="RefSeq" id="NP_809035.1">
    <property type="nucleotide sequence ID" value="NC_004663.1"/>
</dbReference>
<dbReference type="RefSeq" id="WP_011107128.1">
    <property type="nucleotide sequence ID" value="NC_004663.1"/>
</dbReference>
<dbReference type="SMR" id="Q8ABI8"/>
<dbReference type="FunCoup" id="Q8ABI8">
    <property type="interactions" value="486"/>
</dbReference>
<dbReference type="STRING" id="226186.BT_0122"/>
<dbReference type="PaxDb" id="226186-BT_0122"/>
<dbReference type="EnsemblBacteria" id="AAO75229">
    <property type="protein sequence ID" value="AAO75229"/>
    <property type="gene ID" value="BT_0122"/>
</dbReference>
<dbReference type="GeneID" id="60926088"/>
<dbReference type="KEGG" id="bth:BT_0122"/>
<dbReference type="PATRIC" id="fig|226186.12.peg.119"/>
<dbReference type="eggNOG" id="COG0332">
    <property type="taxonomic scope" value="Bacteria"/>
</dbReference>
<dbReference type="HOGENOM" id="CLU_039592_3_1_10"/>
<dbReference type="InParanoid" id="Q8ABI8"/>
<dbReference type="OrthoDB" id="9815506at2"/>
<dbReference type="UniPathway" id="UPA00094"/>
<dbReference type="Proteomes" id="UP000001414">
    <property type="component" value="Chromosome"/>
</dbReference>
<dbReference type="GO" id="GO:0005737">
    <property type="term" value="C:cytoplasm"/>
    <property type="evidence" value="ECO:0007669"/>
    <property type="project" value="UniProtKB-SubCell"/>
</dbReference>
<dbReference type="GO" id="GO:0004315">
    <property type="term" value="F:3-oxoacyl-[acyl-carrier-protein] synthase activity"/>
    <property type="evidence" value="ECO:0007669"/>
    <property type="project" value="InterPro"/>
</dbReference>
<dbReference type="GO" id="GO:0033818">
    <property type="term" value="F:beta-ketoacyl-acyl-carrier-protein synthase III activity"/>
    <property type="evidence" value="ECO:0007669"/>
    <property type="project" value="UniProtKB-UniRule"/>
</dbReference>
<dbReference type="GO" id="GO:0006633">
    <property type="term" value="P:fatty acid biosynthetic process"/>
    <property type="evidence" value="ECO:0007669"/>
    <property type="project" value="UniProtKB-UniRule"/>
</dbReference>
<dbReference type="GO" id="GO:0044550">
    <property type="term" value="P:secondary metabolite biosynthetic process"/>
    <property type="evidence" value="ECO:0000318"/>
    <property type="project" value="GO_Central"/>
</dbReference>
<dbReference type="CDD" id="cd00830">
    <property type="entry name" value="KAS_III"/>
    <property type="match status" value="1"/>
</dbReference>
<dbReference type="FunFam" id="3.40.47.10:FF:000004">
    <property type="entry name" value="3-oxoacyl-[acyl-carrier-protein] synthase 3"/>
    <property type="match status" value="1"/>
</dbReference>
<dbReference type="Gene3D" id="3.40.47.10">
    <property type="match status" value="1"/>
</dbReference>
<dbReference type="HAMAP" id="MF_01815">
    <property type="entry name" value="FabH"/>
    <property type="match status" value="1"/>
</dbReference>
<dbReference type="InterPro" id="IPR013747">
    <property type="entry name" value="ACP_syn_III_C"/>
</dbReference>
<dbReference type="InterPro" id="IPR013751">
    <property type="entry name" value="ACP_syn_III_N"/>
</dbReference>
<dbReference type="InterPro" id="IPR004655">
    <property type="entry name" value="FabH"/>
</dbReference>
<dbReference type="InterPro" id="IPR016039">
    <property type="entry name" value="Thiolase-like"/>
</dbReference>
<dbReference type="NCBIfam" id="TIGR00747">
    <property type="entry name" value="fabH"/>
    <property type="match status" value="1"/>
</dbReference>
<dbReference type="NCBIfam" id="NF006829">
    <property type="entry name" value="PRK09352.1"/>
    <property type="match status" value="1"/>
</dbReference>
<dbReference type="PANTHER" id="PTHR34069">
    <property type="entry name" value="3-OXOACYL-[ACYL-CARRIER-PROTEIN] SYNTHASE 3"/>
    <property type="match status" value="1"/>
</dbReference>
<dbReference type="PANTHER" id="PTHR34069:SF2">
    <property type="entry name" value="BETA-KETOACYL-[ACYL-CARRIER-PROTEIN] SYNTHASE III"/>
    <property type="match status" value="1"/>
</dbReference>
<dbReference type="Pfam" id="PF08545">
    <property type="entry name" value="ACP_syn_III"/>
    <property type="match status" value="1"/>
</dbReference>
<dbReference type="Pfam" id="PF08541">
    <property type="entry name" value="ACP_syn_III_C"/>
    <property type="match status" value="1"/>
</dbReference>
<dbReference type="SUPFAM" id="SSF53901">
    <property type="entry name" value="Thiolase-like"/>
    <property type="match status" value="1"/>
</dbReference>